<sequence length="2374" mass="266604">MNLDSLSLALSQISYLVDNLTKKNYRASQQEIQHIVNRHGPEADRHLLRCLFSHVDFSGDGKSSGKDFHQTQFLIQECVSLITKPNFISTLCYAIDNPLHYQKSLKPSPHLFTQLSKVLKLSKVQEVILGLALSNSSNADLRGFAAQFVKQKLPDLLRSYVDADLGGNQEGGFQDIAIEVLHLLLSHLLFGQKGSSGVGQEQIDAFLKTLCRDFPQERCPVVLAPLLYPDKRDILMDRILPDSGDLNKTMMESSLADFMQEVGYGFCASLEECRNIILQYGVREVTASQVARVLGMMARTHSGLSDGISLQTITNPVGGGGIWSDGKDKSDSSQAWNVEVLIDVVKEVNPNLNFKEVTYELDHPGFLIRDSKGLQIVVYGIQRGLGMEVFPVDLIYRPWKHAEGQLSFIQHSLLSPEVFCFADNPCHTVAIDTLKAPPEDDNREIATWKSLDLVESLLRLSEVGHYEQVKQLFSFPIKHCPDMLVLALLQISTSWHTLRHELISTLMPIFLGNHPNSAIILHYAWHGQGQSPSIRQLIMHSMAEWYMRGEQYDQAKLSRILDVAQDLKSLSMLLNGTPFAFVIDLAALASRREYLKLDKWLTDKIREHGEPFIQACVTFLKRRCPSIMGGLAPEKDQPKSAQLPPETLATMLACLQSCAGSVSQELSETILTMVANCSNVMNKARQPPPGVLPKGRAPSTSSLDAISPVQMDPLSAMGSLSLGVSSTSHTPSMQGFPSLQGSAFSNPQSPAKAFSNLPNPNPSTAFPGINPLSSQLQGPLSTSLSGIGSGLGMPTVSSDVFSARKMSTPGLNPPTFQQTDLSQVWPEANQHFSKEIDDEANSYFQRIYNHPPHPTMSVDEVLEMLQRFKDSNIKREREVFNCMLRNLFEEYRFFPQYPDKELHITACLFGGIIEKGLVTYMALGLALRYVLEALRKPFGSKMYYFGIAALDRFKNRLKDYPQYCQHLASIAHFLQFPHHLQEYIEYGQQSRDPPVKMQGSITTPGSLALAQAQAQSQPPKAPQPGQASTLVTTATTTTTAAKTTTITRPTAVGPKKDVPPSINTTNIDTLLVATDQTERIVEPPENVQEKIAFIFNNLSQSNMSQKVEELKETVKEEFMPWVSQYLVMKRVSIEPNFHSLYSNFLDTLKNPEFVKMVLNETYRNIKVLLTSDKAAANFSDRSLLKNLGHWLGMITLAKNKPILYTDLELKSLLLEAYVKGQQELLYVVPFVAKVLESSLRSVIFRPQNPWTMGIMNVLAELHQEHDLKLNLKFEIEVLCKNLSMDITDLKPGNLLRDKDKLKTLEEQLSAPKKETKPPEELLPIVTTDSVPFTAAPSTPATTTACTATGPPTPQFSYHDINVYALAGLAPHININVNIPLLQAHPQLKQCVRPAIERAVQELVHPVVDRSIKIAMTTCEQIVRKDFALDSEESHMRVAAHHMMRNLTAGMAMITCREPLLMSIATNLKNSFAAALRAPTPQQREMMEEAAARIAQDNCELACCFIQKTAVEKAGPEMDKRLATEFELRKHARQEGRRYCDPMVLTYQAERMPEQIRLKVGGVDPKQLAVYEEFARNVPGFLPSNDLSQPTGFLAQPMKQQAWPTDDVAHIYEKCISDLEQHLHAIPPALAMNPQTQAIRSLLEAVVMARNSRDGIAALGLLQKAVEGLLDATSGADPELLLSYRECHLLVLKALQDGRAYGPQWCNKQITRCLIECRDEYKYNVEAVELLIRNHLVNMQQYDLHLAQSMENGLNYMAVAFAMQLVKLLLVDERSVSHITEADLFHTIETLMRTSAHSRANAPEGLPQLMDVVRSNYEAMIDRHHGGPNFMMHSGISQASEYDDPPGLREKAEYLLREWVNLYHSAAAGRDSTKAFSAFVGQMHQQGILKTDDLITRFFRLCTEMCVEISYRAQAEQQHPTTSPAIIRAKCYHNLDAFVRLIALLVKHSGEATNTVTKINLLNKVLGIVVGVLIQDHDVRQTEFQQLPYHRIFIMLLLELNAPEHVLETINFQTLTAFCNTFHILRPTKAPGFVYAWLELISHRIFIARMLAHTPQQKGWPMYAQLLIDLFKYLAPFLRNVELNKPMQILYKGTLRVLLVLLHDFPEFLCDYHYGFCDVIPPNCIQLRNLILSAFPRNMRLPDPFTPNLKVDMLSEINIAPRILTNFTGVMPSQFKKDLDSYLKTRSPVTFLSELRSNLQVSNEPGNRYNIQLINALVPYVGTQAIAHIHNKGSTPSMSTITHSAHMDIFQNLAVDLDTEGRYLFLNAIANQLRYPNSHTHYFSCTMLYLFAEANAEAIQEQITRVLLERLIVNRPHPWGLLITFIELIKNPAFKFWSHDFVHCAPEIEKLFQSVAQCCMGQKQAQQVMEGTGAS</sequence>
<gene>
    <name type="primary">cnot1</name>
    <name type="ORF">zgc:152902</name>
</gene>
<keyword id="KW-0963">Cytoplasm</keyword>
<keyword id="KW-0539">Nucleus</keyword>
<keyword id="KW-1185">Reference proteome</keyword>
<keyword id="KW-0678">Repressor</keyword>
<keyword id="KW-0943">RNA-mediated gene silencing</keyword>
<keyword id="KW-0804">Transcription</keyword>
<keyword id="KW-0805">Transcription regulation</keyword>
<keyword id="KW-0810">Translation regulation</keyword>
<accession>A1A5H6</accession>
<accession>Q6DRB0</accession>
<protein>
    <recommendedName>
        <fullName>CCR4-NOT transcription complex subunit 1</fullName>
    </recommendedName>
    <alternativeName>
        <fullName>CCR4-associated factor 1</fullName>
    </alternativeName>
</protein>
<proteinExistence type="evidence at transcript level"/>
<evidence type="ECO:0000250" key="1"/>
<evidence type="ECO:0000256" key="2">
    <source>
        <dbReference type="SAM" id="MobiDB-lite"/>
    </source>
</evidence>
<evidence type="ECO:0000305" key="3"/>
<dbReference type="EMBL" id="BC128655">
    <property type="protein sequence ID" value="AAI28656.1"/>
    <property type="molecule type" value="mRNA"/>
</dbReference>
<dbReference type="EMBL" id="AY648849">
    <property type="protein sequence ID" value="AAT68167.1"/>
    <property type="molecule type" value="mRNA"/>
</dbReference>
<dbReference type="RefSeq" id="NP_001073420.1">
    <property type="nucleotide sequence ID" value="NM_001079951.2"/>
</dbReference>
<dbReference type="SMR" id="A1A5H6"/>
<dbReference type="FunCoup" id="A1A5H6">
    <property type="interactions" value="2954"/>
</dbReference>
<dbReference type="STRING" id="7955.ENSDARP00000111504"/>
<dbReference type="PaxDb" id="7955-ENSDARP00000004298"/>
<dbReference type="PeptideAtlas" id="A1A5H6"/>
<dbReference type="GeneID" id="448949"/>
<dbReference type="KEGG" id="dre:448949"/>
<dbReference type="AGR" id="ZFIN:ZDB-GENE-040915-1"/>
<dbReference type="CTD" id="23019"/>
<dbReference type="ZFIN" id="ZDB-GENE-040915-1">
    <property type="gene designation" value="cnot1"/>
</dbReference>
<dbReference type="eggNOG" id="KOG1831">
    <property type="taxonomic scope" value="Eukaryota"/>
</dbReference>
<dbReference type="InParanoid" id="A1A5H6"/>
<dbReference type="OrthoDB" id="1933107at2759"/>
<dbReference type="PhylomeDB" id="A1A5H6"/>
<dbReference type="Reactome" id="R-DRE-6804115">
    <property type="pathway name" value="TP53 regulates transcription of additional cell cycle genes whose exact role in the p53 pathway remain uncertain"/>
</dbReference>
<dbReference type="PRO" id="PR:A1A5H6"/>
<dbReference type="Proteomes" id="UP000000437">
    <property type="component" value="Alternate scaffold 25"/>
</dbReference>
<dbReference type="Proteomes" id="UP000000437">
    <property type="component" value="Chromosome 25"/>
</dbReference>
<dbReference type="GO" id="GO:0030014">
    <property type="term" value="C:CCR4-NOT complex"/>
    <property type="evidence" value="ECO:0000250"/>
    <property type="project" value="UniProtKB"/>
</dbReference>
<dbReference type="GO" id="GO:0030015">
    <property type="term" value="C:CCR4-NOT core complex"/>
    <property type="evidence" value="ECO:0000318"/>
    <property type="project" value="GO_Central"/>
</dbReference>
<dbReference type="GO" id="GO:0005634">
    <property type="term" value="C:nucleus"/>
    <property type="evidence" value="ECO:0007669"/>
    <property type="project" value="UniProtKB-SubCell"/>
</dbReference>
<dbReference type="GO" id="GO:0000932">
    <property type="term" value="C:P-body"/>
    <property type="evidence" value="ECO:0000250"/>
    <property type="project" value="UniProtKB"/>
</dbReference>
<dbReference type="GO" id="GO:0060090">
    <property type="term" value="F:molecular adaptor activity"/>
    <property type="evidence" value="ECO:0000318"/>
    <property type="project" value="GO_Central"/>
</dbReference>
<dbReference type="GO" id="GO:0030331">
    <property type="term" value="F:nuclear estrogen receptor binding"/>
    <property type="evidence" value="ECO:0000250"/>
    <property type="project" value="UniProtKB"/>
</dbReference>
<dbReference type="GO" id="GO:0042974">
    <property type="term" value="F:nuclear retinoic acid receptor binding"/>
    <property type="evidence" value="ECO:0000250"/>
    <property type="project" value="UniProtKB"/>
</dbReference>
<dbReference type="GO" id="GO:0048589">
    <property type="term" value="P:developmental growth"/>
    <property type="evidence" value="ECO:0000315"/>
    <property type="project" value="ZFIN"/>
</dbReference>
<dbReference type="GO" id="GO:0033147">
    <property type="term" value="P:negative regulation of intracellular estrogen receptor signaling pathway"/>
    <property type="evidence" value="ECO:0000250"/>
    <property type="project" value="UniProtKB"/>
</dbReference>
<dbReference type="GO" id="GO:0048387">
    <property type="term" value="P:negative regulation of retinoic acid receptor signaling pathway"/>
    <property type="evidence" value="ECO:0000250"/>
    <property type="project" value="UniProtKB"/>
</dbReference>
<dbReference type="GO" id="GO:0000122">
    <property type="term" value="P:negative regulation of transcription by RNA polymerase II"/>
    <property type="evidence" value="ECO:0000250"/>
    <property type="project" value="UniProtKB"/>
</dbReference>
<dbReference type="GO" id="GO:0017148">
    <property type="term" value="P:negative regulation of translation"/>
    <property type="evidence" value="ECO:0007669"/>
    <property type="project" value="InterPro"/>
</dbReference>
<dbReference type="GO" id="GO:0000288">
    <property type="term" value="P:nuclear-transcribed mRNA catabolic process, deadenylation-dependent decay"/>
    <property type="evidence" value="ECO:0000318"/>
    <property type="project" value="GO_Central"/>
</dbReference>
<dbReference type="GO" id="GO:0010606">
    <property type="term" value="P:positive regulation of cytoplasmic mRNA processing body assembly"/>
    <property type="evidence" value="ECO:0000250"/>
    <property type="project" value="UniProtKB"/>
</dbReference>
<dbReference type="GO" id="GO:1900153">
    <property type="term" value="P:positive regulation of nuclear-transcribed mRNA catabolic process, deadenylation-dependent decay"/>
    <property type="evidence" value="ECO:0000250"/>
    <property type="project" value="UniProtKB"/>
</dbReference>
<dbReference type="GO" id="GO:0060213">
    <property type="term" value="P:positive regulation of nuclear-transcribed mRNA poly(A) tail shortening"/>
    <property type="evidence" value="ECO:0000250"/>
    <property type="project" value="UniProtKB"/>
</dbReference>
<dbReference type="GO" id="GO:0031047">
    <property type="term" value="P:regulatory ncRNA-mediated gene silencing"/>
    <property type="evidence" value="ECO:0007669"/>
    <property type="project" value="UniProtKB-KW"/>
</dbReference>
<dbReference type="CDD" id="cd20710">
    <property type="entry name" value="NOT1_connector"/>
    <property type="match status" value="1"/>
</dbReference>
<dbReference type="FunFam" id="1.25.40.800:FF:000001">
    <property type="entry name" value="CCR4-NOT transcription complex subunit 1"/>
    <property type="match status" value="1"/>
</dbReference>
<dbReference type="FunFam" id="1.25.40.180:FF:000005">
    <property type="entry name" value="Ccr4-not transcription complex subunit 1 isoform"/>
    <property type="match status" value="1"/>
</dbReference>
<dbReference type="FunFam" id="1.25.40.790:FF:000001">
    <property type="entry name" value="Ccr4-not transcription complex subunit 1 isoform"/>
    <property type="match status" value="1"/>
</dbReference>
<dbReference type="FunFam" id="1.25.40.840:FF:000001">
    <property type="entry name" value="Ccr4-not transcription complex subunit 1 isoform"/>
    <property type="match status" value="1"/>
</dbReference>
<dbReference type="Gene3D" id="1.25.40.180">
    <property type="match status" value="1"/>
</dbReference>
<dbReference type="Gene3D" id="1.25.40.790">
    <property type="match status" value="1"/>
</dbReference>
<dbReference type="Gene3D" id="1.25.40.800">
    <property type="match status" value="1"/>
</dbReference>
<dbReference type="Gene3D" id="1.25.40.840">
    <property type="entry name" value="CCR4-NOT transcription complex subunit 1 TTP binding domain"/>
    <property type="match status" value="1"/>
</dbReference>
<dbReference type="InterPro" id="IPR007196">
    <property type="entry name" value="CCR4-Not_Not1_C"/>
</dbReference>
<dbReference type="InterPro" id="IPR055454">
    <property type="entry name" value="CNOT1-like_NOT1_connector"/>
</dbReference>
<dbReference type="InterPro" id="IPR055104">
    <property type="entry name" value="CNOT1_1st"/>
</dbReference>
<dbReference type="InterPro" id="IPR032191">
    <property type="entry name" value="CNOT1_CAF1_bind"/>
</dbReference>
<dbReference type="InterPro" id="IPR024557">
    <property type="entry name" value="CNOT1_dom_4"/>
</dbReference>
<dbReference type="InterPro" id="IPR032194">
    <property type="entry name" value="CNOT1_HEAT"/>
</dbReference>
<dbReference type="InterPro" id="IPR032193">
    <property type="entry name" value="CNOT1_TTP_bind"/>
</dbReference>
<dbReference type="InterPro" id="IPR038535">
    <property type="entry name" value="CNOT1_TTP_bind_sf"/>
</dbReference>
<dbReference type="InterPro" id="IPR040398">
    <property type="entry name" value="Not1"/>
</dbReference>
<dbReference type="PANTHER" id="PTHR13162">
    <property type="entry name" value="CCR4-NOT TRANSCRIPTION COMPLEX"/>
    <property type="match status" value="1"/>
</dbReference>
<dbReference type="PANTHER" id="PTHR13162:SF8">
    <property type="entry name" value="CCR4-NOT TRANSCRIPTION COMPLEX SUBUNIT 1"/>
    <property type="match status" value="1"/>
</dbReference>
<dbReference type="Pfam" id="PF22940">
    <property type="entry name" value="CNOT1_1st"/>
    <property type="match status" value="1"/>
</dbReference>
<dbReference type="Pfam" id="PF16415">
    <property type="entry name" value="CNOT1_CAF1_bind"/>
    <property type="match status" value="1"/>
</dbReference>
<dbReference type="Pfam" id="PF16418">
    <property type="entry name" value="CNOT1_HEAT"/>
    <property type="match status" value="1"/>
</dbReference>
<dbReference type="Pfam" id="PF16417">
    <property type="entry name" value="CNOT1_TTP_bind"/>
    <property type="match status" value="1"/>
</dbReference>
<dbReference type="Pfam" id="PF12842">
    <property type="entry name" value="DUF3819"/>
    <property type="match status" value="1"/>
</dbReference>
<dbReference type="Pfam" id="PF04054">
    <property type="entry name" value="Not1"/>
    <property type="match status" value="1"/>
</dbReference>
<dbReference type="Pfam" id="PF23590">
    <property type="entry name" value="NOT1_connector"/>
    <property type="match status" value="1"/>
</dbReference>
<reference key="1">
    <citation type="submission" date="2006-12" db="EMBL/GenBank/DDBJ databases">
        <authorList>
            <consortium name="NIH - Zebrafish Gene Collection (ZGC) project"/>
        </authorList>
    </citation>
    <scope>NUCLEOTIDE SEQUENCE [LARGE SCALE MRNA]</scope>
    <source>
        <strain>AB</strain>
    </source>
</reference>
<reference key="2">
    <citation type="journal article" date="2004" name="Proc. Natl. Acad. Sci. U.S.A.">
        <title>Identification of 315 genes essential for early zebrafish development.</title>
        <authorList>
            <person name="Amsterdam A."/>
            <person name="Nissen R.M."/>
            <person name="Sun Z."/>
            <person name="Swindell E.C."/>
            <person name="Farrington S."/>
            <person name="Hopkins N."/>
        </authorList>
    </citation>
    <scope>NUCLEOTIDE SEQUENCE [LARGE SCALE MRNA] OF 1-1595</scope>
</reference>
<organism>
    <name type="scientific">Danio rerio</name>
    <name type="common">Zebrafish</name>
    <name type="synonym">Brachydanio rerio</name>
    <dbReference type="NCBI Taxonomy" id="7955"/>
    <lineage>
        <taxon>Eukaryota</taxon>
        <taxon>Metazoa</taxon>
        <taxon>Chordata</taxon>
        <taxon>Craniata</taxon>
        <taxon>Vertebrata</taxon>
        <taxon>Euteleostomi</taxon>
        <taxon>Actinopterygii</taxon>
        <taxon>Neopterygii</taxon>
        <taxon>Teleostei</taxon>
        <taxon>Ostariophysi</taxon>
        <taxon>Cypriniformes</taxon>
        <taxon>Danionidae</taxon>
        <taxon>Danioninae</taxon>
        <taxon>Danio</taxon>
    </lineage>
</organism>
<feature type="chain" id="PRO_0000315543" description="CCR4-NOT transcription complex subunit 1">
    <location>
        <begin position="1"/>
        <end position="2374"/>
    </location>
</feature>
<feature type="region of interest" description="Disordered" evidence="2">
    <location>
        <begin position="1009"/>
        <end position="1060"/>
    </location>
</feature>
<feature type="region of interest" description="Interaction with CCR4-NOT complex catalytic subunits" evidence="1">
    <location>
        <begin position="1082"/>
        <end position="1604"/>
    </location>
</feature>
<feature type="short sequence motif" description="LXXLL">
    <location>
        <begin position="153"/>
        <end position="157"/>
    </location>
</feature>
<feature type="short sequence motif" description="LXXLL">
    <location>
        <begin position="181"/>
        <end position="185"/>
    </location>
</feature>
<feature type="short sequence motif" description="LXXLL">
    <location>
        <begin position="223"/>
        <end position="227"/>
    </location>
</feature>
<feature type="short sequence motif" description="LXXLL">
    <location>
        <begin position="570"/>
        <end position="574"/>
    </location>
</feature>
<feature type="short sequence motif" description="LXXLL">
    <location>
        <begin position="1638"/>
        <end position="1642"/>
    </location>
</feature>
<feature type="short sequence motif" description="LXXLL">
    <location>
        <begin position="1940"/>
        <end position="1944"/>
    </location>
</feature>
<feature type="short sequence motif" description="LXXLL">
    <location>
        <begin position="2094"/>
        <end position="2098"/>
    </location>
</feature>
<feature type="compositionally biased region" description="Low complexity" evidence="2">
    <location>
        <begin position="1009"/>
        <end position="1051"/>
    </location>
</feature>
<feature type="sequence conflict" description="In Ref. 2; AAT68167." evidence="3" ref="2">
    <original>N</original>
    <variation>Y</variation>
    <location>
        <position position="424"/>
    </location>
</feature>
<feature type="sequence conflict" description="In Ref. 2; AAT68167." evidence="3" ref="2">
    <original>T</original>
    <variation>I</variation>
    <location>
        <position position="433"/>
    </location>
</feature>
<name>CNOT1_DANRE</name>
<comment type="function">
    <text evidence="1">Scaffolding component of the CCR4-NOT complex which is one of the major cellular mRNA deadenylases and is linked to various cellular processes including bulk mRNA degradation, miRNA-mediated repression, translational repression during translational initiation and general transcription regulation. Additional complex functions may be a consequence of its influence on mRNA expression. Its scaffolding function implies its interaction with the catalytic complex module and diverse RNA-binding proteins mediating the complex recruitment to selected mRNA 3'UTRs. Acts as a transcriptional repressor. Represses the ligand-dependent transcriptional activation by nuclear receptors (By similarity).</text>
</comment>
<comment type="subunit">
    <text evidence="1">Component of the CCR4-NOT complex.</text>
</comment>
<comment type="subcellular location">
    <subcellularLocation>
        <location evidence="1">Cytoplasm</location>
    </subcellularLocation>
    <subcellularLocation>
        <location evidence="1">Nucleus</location>
    </subcellularLocation>
</comment>
<comment type="domain">
    <text evidence="1">Contains Leu-Xaa-Xaa-Leu-Leu (LXXLL) motifs, a motif known to be important for the association with nuclear receptors.</text>
</comment>
<comment type="similarity">
    <text evidence="3">Belongs to the CNOT1 family.</text>
</comment>